<gene>
    <name evidence="6" type="primary">ospC3</name>
    <name type="ORF">CXB49_08835</name>
</gene>
<dbReference type="EC" id="4.3.99.-" evidence="5"/>
<dbReference type="EMBL" id="CP025429">
    <property type="protein sequence ID" value="AUH50908.1"/>
    <property type="molecule type" value="Genomic_DNA"/>
</dbReference>
<dbReference type="RefSeq" id="WP_101708057.1">
    <property type="nucleotide sequence ID" value="NZ_CP025429.1"/>
</dbReference>
<dbReference type="SMR" id="A0A2H5DV25"/>
<dbReference type="KEGG" id="chro:CXB49_08835"/>
<dbReference type="Proteomes" id="UP000234260">
    <property type="component" value="Chromosome"/>
</dbReference>
<dbReference type="GO" id="GO:0005576">
    <property type="term" value="C:extracellular region"/>
    <property type="evidence" value="ECO:0007669"/>
    <property type="project" value="UniProtKB-SubCell"/>
</dbReference>
<dbReference type="GO" id="GO:0030430">
    <property type="term" value="C:host cell cytoplasm"/>
    <property type="evidence" value="ECO:0007669"/>
    <property type="project" value="UniProtKB-SubCell"/>
</dbReference>
<dbReference type="GO" id="GO:0140740">
    <property type="term" value="F:ADP-riboxanase activity"/>
    <property type="evidence" value="ECO:0000314"/>
    <property type="project" value="UniProtKB"/>
</dbReference>
<dbReference type="GO" id="GO:0090729">
    <property type="term" value="F:toxin activity"/>
    <property type="evidence" value="ECO:0007669"/>
    <property type="project" value="UniProtKB-KW"/>
</dbReference>
<dbReference type="Gene3D" id="1.25.40.20">
    <property type="entry name" value="Ankyrin repeat-containing domain"/>
    <property type="match status" value="1"/>
</dbReference>
<dbReference type="InterPro" id="IPR002110">
    <property type="entry name" value="Ankyrin_rpt"/>
</dbReference>
<dbReference type="InterPro" id="IPR036770">
    <property type="entry name" value="Ankyrin_rpt-contain_sf"/>
</dbReference>
<dbReference type="InterPro" id="IPR010366">
    <property type="entry name" value="OspC1-4"/>
</dbReference>
<dbReference type="Pfam" id="PF13606">
    <property type="entry name" value="Ank_3"/>
    <property type="match status" value="1"/>
</dbReference>
<dbReference type="Pfam" id="PF06128">
    <property type="entry name" value="Shigella_OspC"/>
    <property type="match status" value="1"/>
</dbReference>
<dbReference type="SMART" id="SM00248">
    <property type="entry name" value="ANK"/>
    <property type="match status" value="1"/>
</dbReference>
<dbReference type="SUPFAM" id="SSF48403">
    <property type="entry name" value="Ankyrin repeat"/>
    <property type="match status" value="1"/>
</dbReference>
<dbReference type="PROSITE" id="PS50297">
    <property type="entry name" value="ANK_REP_REGION"/>
    <property type="match status" value="1"/>
</dbReference>
<dbReference type="PROSITE" id="PS50088">
    <property type="entry name" value="ANK_REPEAT"/>
    <property type="match status" value="1"/>
</dbReference>
<reference key="1">
    <citation type="submission" date="2017-12" db="EMBL/GenBank/DDBJ databases">
        <title>Whole genome sequence of Chromobacterium ATCC 53434.</title>
        <authorList>
            <person name="Pishchany G."/>
            <person name="Koren S."/>
            <person name="Kolter R."/>
        </authorList>
    </citation>
    <scope>NUCLEOTIDE SEQUENCE [LARGE SCALE GENOMIC DNA]</scope>
    <source>
        <strain>ATCC 53434 / SC 14030</strain>
    </source>
</reference>
<reference key="2">
    <citation type="journal article" date="2021" name="Nature">
        <title>Shigella evades pyroptosis by arginine ADP-riboxanation of caspase-11.</title>
        <authorList>
            <person name="Li Z."/>
            <person name="Liu W."/>
            <person name="Fu J."/>
            <person name="Cheng S."/>
            <person name="Xu Y."/>
            <person name="Wang Z."/>
            <person name="Liu X."/>
            <person name="Shi X."/>
            <person name="Liu Y."/>
            <person name="Qi X."/>
            <person name="Liu X."/>
            <person name="Ding J."/>
            <person name="Shao F."/>
        </authorList>
    </citation>
    <scope>FUNCTION</scope>
    <scope>CATALYTIC ACTIVITY</scope>
    <scope>MUTAGENESIS OF GLU-187 AND HIS-327</scope>
    <source>
        <strain>ATCC 53434 / SC 14030</strain>
    </source>
</reference>
<proteinExistence type="evidence at protein level"/>
<comment type="function">
    <text evidence="1 5">ADP-riboxanase effector that inhibits host cell pyroptosis (PubMed:34671164). Acts by mediating arginine ADP-riboxanation of host CASP4/CASP11, blocking CASP4/CASP11 autoprocessing (PubMed:34671164). This prevents CASP4 activation and ability to recognize and cleave GSDMD, thereby inhibiting LPS-induced pyroptosis (By similarity). ADP-riboxanation takes place in two steps: OspC3 first catalyzes ADP-ribosylation of target Arg, and then initiates a deamination to remove one N-omega group (By similarity).</text>
</comment>
<comment type="catalytic activity">
    <reaction evidence="5">
        <text>L-arginyl-[protein] + NAD(+) = ADP-riboxanated L-argininyl-[protein] + nicotinamide + NH4(+) + H(+)</text>
        <dbReference type="Rhea" id="RHEA:69500"/>
        <dbReference type="Rhea" id="RHEA-COMP:10532"/>
        <dbReference type="Rhea" id="RHEA-COMP:17719"/>
        <dbReference type="ChEBI" id="CHEBI:15378"/>
        <dbReference type="ChEBI" id="CHEBI:17154"/>
        <dbReference type="ChEBI" id="CHEBI:28938"/>
        <dbReference type="ChEBI" id="CHEBI:29965"/>
        <dbReference type="ChEBI" id="CHEBI:57540"/>
        <dbReference type="ChEBI" id="CHEBI:184300"/>
    </reaction>
    <physiologicalReaction direction="left-to-right" evidence="5">
        <dbReference type="Rhea" id="RHEA:69501"/>
    </physiologicalReaction>
</comment>
<comment type="subcellular location">
    <subcellularLocation>
        <location evidence="1">Secreted</location>
    </subcellularLocation>
    <subcellularLocation>
        <location evidence="1">Host cytoplasm</location>
    </subcellularLocation>
    <text evidence="1">Secreted via the type III secretion system (T3SS).</text>
</comment>
<comment type="similarity">
    <text evidence="7">Belongs to the OspC family.</text>
</comment>
<keyword id="KW-0040">ANK repeat</keyword>
<keyword id="KW-1035">Host cytoplasm</keyword>
<keyword id="KW-0456">Lyase</keyword>
<keyword id="KW-0520">NAD</keyword>
<keyword id="KW-0677">Repeat</keyword>
<keyword id="KW-0964">Secreted</keyword>
<keyword id="KW-0800">Toxin</keyword>
<keyword id="KW-0843">Virulence</keyword>
<feature type="chain" id="PRO_0000455084" description="Arginine ADP-riboxanase OspC3">
    <location>
        <begin position="1"/>
        <end position="487"/>
    </location>
</feature>
<feature type="repeat" description="ANK 1" evidence="3">
    <location>
        <begin position="368"/>
        <end position="398"/>
    </location>
</feature>
<feature type="repeat" description="ANK 2" evidence="3">
    <location>
        <begin position="444"/>
        <end position="473"/>
    </location>
</feature>
<feature type="region of interest" description="Disordered" evidence="4">
    <location>
        <begin position="1"/>
        <end position="41"/>
    </location>
</feature>
<feature type="compositionally biased region" description="Polar residues" evidence="4">
    <location>
        <begin position="1"/>
        <end position="14"/>
    </location>
</feature>
<feature type="active site" evidence="2">
    <location>
        <position position="325"/>
    </location>
</feature>
<feature type="binding site" evidence="1">
    <location>
        <position position="137"/>
    </location>
    <ligand>
        <name>NAD(+)</name>
        <dbReference type="ChEBI" id="CHEBI:57540"/>
    </ligand>
</feature>
<feature type="binding site" evidence="1">
    <location>
        <position position="138"/>
    </location>
    <ligand>
        <name>NAD(+)</name>
        <dbReference type="ChEBI" id="CHEBI:57540"/>
    </ligand>
</feature>
<feature type="binding site" evidence="1">
    <location>
        <position position="139"/>
    </location>
    <ligand>
        <name>NAD(+)</name>
        <dbReference type="ChEBI" id="CHEBI:57540"/>
    </ligand>
</feature>
<feature type="binding site" evidence="1">
    <location>
        <position position="164"/>
    </location>
    <ligand>
        <name>NAD(+)</name>
        <dbReference type="ChEBI" id="CHEBI:57540"/>
    </ligand>
</feature>
<feature type="binding site" evidence="1">
    <location>
        <position position="167"/>
    </location>
    <ligand>
        <name>NAD(+)</name>
        <dbReference type="ChEBI" id="CHEBI:57540"/>
    </ligand>
</feature>
<feature type="binding site" evidence="1">
    <location>
        <position position="168"/>
    </location>
    <ligand>
        <name>NAD(+)</name>
        <dbReference type="ChEBI" id="CHEBI:57540"/>
    </ligand>
</feature>
<feature type="site" description="Important for catalytic activity" evidence="2">
    <location>
        <position position="137"/>
    </location>
</feature>
<feature type="site" description="Important for catalytic activity" evidence="2">
    <location>
        <position position="183"/>
    </location>
</feature>
<feature type="site" description="Important for catalytic activity" evidence="2">
    <location>
        <position position="207"/>
    </location>
</feature>
<feature type="site" description="Important for catalytic activity" evidence="2">
    <location>
        <position position="230"/>
    </location>
</feature>
<feature type="mutagenesis site" description="In EH/AA mutant; abolished arginine ADP-riboxanation of host CASP4/CASP11; when associated with A-327." evidence="5">
    <original>E</original>
    <variation>A</variation>
    <location>
        <position position="187"/>
    </location>
</feature>
<feature type="mutagenesis site" description="In EH/AA mutant; abolished arginine ADP-riboxanation of host CASP4/CASP11; when associated with A-187." evidence="5">
    <original>H</original>
    <variation>A</variation>
    <location>
        <position position="327"/>
    </location>
</feature>
<name>OSPC3_CHRS5</name>
<accession>A0A2H5DV25</accession>
<sequence>MRVETHSPSFTNPNPAEACSGDPTEMGSRLSGVSRAPLPHAAAGRDGEAAAAGKIGAFLRKAVAAQSYGLMFANGKLFEATGDALEKREQYGFSALKRLDGLSRRNLDAVAARLGALDSAEQALKQHIMAGAWHFRHQSNAALDDGEKATIASNHLLSRQARSSGGNTFADDKALLSNHDFVFFGVEFSGRDKNDKPLNHKHSTMDFGANAYVVSDALPACRNGYLTLTDHFFNRVPGGREAEHQDFVGRFAQMGRESGRWIHEGKYRQNAPLFCYRDMKAAVALHLIEFMRNSQDEAFKAYVFDQATQSGPALDRVLNSVFQAEFHIPRLMATTDYAKHPLRPMLLKEAVDSVNLPALSDLVSNRGDAVTAMWHAINKGKDEVVAYLLGNWQFEAKDFSHAPAGFYHELNYALSESGASVYILDQFLSRGWAAVNAPFEHVNRGDTMLDNAVKYGNREMVAALIKHGADRNLLSKWHKSDLDALLA</sequence>
<protein>
    <recommendedName>
        <fullName evidence="7">Arginine ADP-riboxanase OspC3</fullName>
        <ecNumber evidence="5">4.3.99.-</ecNumber>
    </recommendedName>
</protein>
<evidence type="ECO:0000250" key="1">
    <source>
        <dbReference type="UniProtKB" id="A0A0H2US87"/>
    </source>
</evidence>
<evidence type="ECO:0000250" key="2">
    <source>
        <dbReference type="UniProtKB" id="Q7NWF2"/>
    </source>
</evidence>
<evidence type="ECO:0000255" key="3"/>
<evidence type="ECO:0000256" key="4">
    <source>
        <dbReference type="SAM" id="MobiDB-lite"/>
    </source>
</evidence>
<evidence type="ECO:0000269" key="5">
    <source>
    </source>
</evidence>
<evidence type="ECO:0000303" key="6">
    <source>
    </source>
</evidence>
<evidence type="ECO:0000305" key="7"/>
<organism>
    <name type="scientific">Chromobacterium sp. (strain ATCC 53434 / SC 14030)</name>
    <dbReference type="NCBI Taxonomy" id="2059672"/>
    <lineage>
        <taxon>Bacteria</taxon>
        <taxon>Pseudomonadati</taxon>
        <taxon>Pseudomonadota</taxon>
        <taxon>Betaproteobacteria</taxon>
        <taxon>Neisseriales</taxon>
        <taxon>Chromobacteriaceae</taxon>
        <taxon>Chromobacterium</taxon>
    </lineage>
</organism>